<name>ACYP_BURM7</name>
<proteinExistence type="inferred from homology"/>
<accession>A3MGM0</accession>
<gene>
    <name type="primary">acyP</name>
    <name type="ordered locus">BMA10247_A2235</name>
</gene>
<protein>
    <recommendedName>
        <fullName>Acylphosphatase</fullName>
        <ecNumber>3.6.1.7</ecNumber>
    </recommendedName>
    <alternativeName>
        <fullName>Acylphosphate phosphohydrolase</fullName>
    </alternativeName>
</protein>
<keyword id="KW-0378">Hydrolase</keyword>
<sequence>MSGDDLDERIETYYVRVRGVVQGVGFRHATVREAHALKLRGWVANLDDGSVEAMLQGSAPQIDRMLAWLRHGPPAAHVTEVTFEEHRTDKRFERFQQH</sequence>
<dbReference type="EC" id="3.6.1.7"/>
<dbReference type="EMBL" id="CP000547">
    <property type="protein sequence ID" value="ABO03554.1"/>
    <property type="status" value="ALT_INIT"/>
    <property type="molecule type" value="Genomic_DNA"/>
</dbReference>
<dbReference type="RefSeq" id="WP_004187760.1">
    <property type="nucleotide sequence ID" value="NZ_CP007801.1"/>
</dbReference>
<dbReference type="SMR" id="A3MGM0"/>
<dbReference type="KEGG" id="bmaz:BM44_3795"/>
<dbReference type="KEGG" id="bmn:BMA10247_A2235"/>
<dbReference type="PATRIC" id="fig|320389.8.peg.4313"/>
<dbReference type="GO" id="GO:0003998">
    <property type="term" value="F:acylphosphatase activity"/>
    <property type="evidence" value="ECO:0007669"/>
    <property type="project" value="UniProtKB-EC"/>
</dbReference>
<dbReference type="Gene3D" id="3.30.70.100">
    <property type="match status" value="1"/>
</dbReference>
<dbReference type="InterPro" id="IPR020456">
    <property type="entry name" value="Acylphosphatase"/>
</dbReference>
<dbReference type="InterPro" id="IPR001792">
    <property type="entry name" value="Acylphosphatase-like_dom"/>
</dbReference>
<dbReference type="InterPro" id="IPR036046">
    <property type="entry name" value="Acylphosphatase-like_dom_sf"/>
</dbReference>
<dbReference type="InterPro" id="IPR017968">
    <property type="entry name" value="Acylphosphatase_CS"/>
</dbReference>
<dbReference type="NCBIfam" id="NF010998">
    <property type="entry name" value="PRK14424.1"/>
    <property type="match status" value="1"/>
</dbReference>
<dbReference type="PANTHER" id="PTHR47268">
    <property type="entry name" value="ACYLPHOSPHATASE"/>
    <property type="match status" value="1"/>
</dbReference>
<dbReference type="PANTHER" id="PTHR47268:SF4">
    <property type="entry name" value="ACYLPHOSPHATASE"/>
    <property type="match status" value="1"/>
</dbReference>
<dbReference type="Pfam" id="PF00708">
    <property type="entry name" value="Acylphosphatase"/>
    <property type="match status" value="1"/>
</dbReference>
<dbReference type="PRINTS" id="PR00112">
    <property type="entry name" value="ACYLPHPHTASE"/>
</dbReference>
<dbReference type="SUPFAM" id="SSF54975">
    <property type="entry name" value="Acylphosphatase/BLUF domain-like"/>
    <property type="match status" value="1"/>
</dbReference>
<dbReference type="PROSITE" id="PS00150">
    <property type="entry name" value="ACYLPHOSPHATASE_1"/>
    <property type="match status" value="1"/>
</dbReference>
<dbReference type="PROSITE" id="PS00151">
    <property type="entry name" value="ACYLPHOSPHATASE_2"/>
    <property type="match status" value="1"/>
</dbReference>
<dbReference type="PROSITE" id="PS51160">
    <property type="entry name" value="ACYLPHOSPHATASE_3"/>
    <property type="match status" value="1"/>
</dbReference>
<comment type="catalytic activity">
    <reaction>
        <text>an acyl phosphate + H2O = a carboxylate + phosphate + H(+)</text>
        <dbReference type="Rhea" id="RHEA:14965"/>
        <dbReference type="ChEBI" id="CHEBI:15377"/>
        <dbReference type="ChEBI" id="CHEBI:15378"/>
        <dbReference type="ChEBI" id="CHEBI:29067"/>
        <dbReference type="ChEBI" id="CHEBI:43474"/>
        <dbReference type="ChEBI" id="CHEBI:59918"/>
        <dbReference type="EC" id="3.6.1.7"/>
    </reaction>
</comment>
<comment type="similarity">
    <text evidence="2">Belongs to the acylphosphatase family.</text>
</comment>
<comment type="sequence caution" evidence="2">
    <conflict type="erroneous initiation">
        <sequence resource="EMBL-CDS" id="ABO03554"/>
    </conflict>
</comment>
<evidence type="ECO:0000255" key="1">
    <source>
        <dbReference type="PROSITE-ProRule" id="PRU00520"/>
    </source>
</evidence>
<evidence type="ECO:0000305" key="2"/>
<reference key="1">
    <citation type="journal article" date="2010" name="Genome Biol. Evol.">
        <title>Continuing evolution of Burkholderia mallei through genome reduction and large-scale rearrangements.</title>
        <authorList>
            <person name="Losada L."/>
            <person name="Ronning C.M."/>
            <person name="DeShazer D."/>
            <person name="Woods D."/>
            <person name="Fedorova N."/>
            <person name="Kim H.S."/>
            <person name="Shabalina S.A."/>
            <person name="Pearson T.R."/>
            <person name="Brinkac L."/>
            <person name="Tan P."/>
            <person name="Nandi T."/>
            <person name="Crabtree J."/>
            <person name="Badger J."/>
            <person name="Beckstrom-Sternberg S."/>
            <person name="Saqib M."/>
            <person name="Schutzer S.E."/>
            <person name="Keim P."/>
            <person name="Nierman W.C."/>
        </authorList>
    </citation>
    <scope>NUCLEOTIDE SEQUENCE [LARGE SCALE GENOMIC DNA]</scope>
    <source>
        <strain>NCTC 10247</strain>
    </source>
</reference>
<feature type="chain" id="PRO_0000326671" description="Acylphosphatase">
    <location>
        <begin position="1"/>
        <end position="98"/>
    </location>
</feature>
<feature type="domain" description="Acylphosphatase-like" evidence="1">
    <location>
        <begin position="12"/>
        <end position="98"/>
    </location>
</feature>
<feature type="active site" evidence="1">
    <location>
        <position position="27"/>
    </location>
</feature>
<feature type="active site" evidence="1">
    <location>
        <position position="45"/>
    </location>
</feature>
<organism>
    <name type="scientific">Burkholderia mallei (strain NCTC 10247)</name>
    <dbReference type="NCBI Taxonomy" id="320389"/>
    <lineage>
        <taxon>Bacteria</taxon>
        <taxon>Pseudomonadati</taxon>
        <taxon>Pseudomonadota</taxon>
        <taxon>Betaproteobacteria</taxon>
        <taxon>Burkholderiales</taxon>
        <taxon>Burkholderiaceae</taxon>
        <taxon>Burkholderia</taxon>
        <taxon>pseudomallei group</taxon>
    </lineage>
</organism>